<name>MYO10_BOVIN</name>
<gene>
    <name type="primary">MYO10</name>
</gene>
<dbReference type="EMBL" id="U55042">
    <property type="protein sequence ID" value="AAB39486.1"/>
    <property type="molecule type" value="mRNA"/>
</dbReference>
<dbReference type="PIR" id="T18519">
    <property type="entry name" value="T18519"/>
</dbReference>
<dbReference type="RefSeq" id="NP_776819.1">
    <property type="nucleotide sequence ID" value="NM_174394.2"/>
</dbReference>
<dbReference type="PDB" id="2N9B">
    <property type="method" value="NMR"/>
    <property type="chains" value="A/B=884-921"/>
</dbReference>
<dbReference type="PDB" id="5HMO">
    <property type="method" value="X-ray"/>
    <property type="resolution" value="3.49 A"/>
    <property type="chains" value="A/C=796-929"/>
</dbReference>
<dbReference type="PDB" id="6HR1">
    <property type="method" value="X-ray"/>
    <property type="resolution" value="1.90 A"/>
    <property type="chains" value="A/B=826-837"/>
</dbReference>
<dbReference type="PDBsum" id="2N9B"/>
<dbReference type="PDBsum" id="5HMO"/>
<dbReference type="PDBsum" id="6HR1"/>
<dbReference type="SMR" id="P79114"/>
<dbReference type="DIP" id="DIP-46150N"/>
<dbReference type="FunCoup" id="P79114">
    <property type="interactions" value="234"/>
</dbReference>
<dbReference type="IntAct" id="P79114">
    <property type="interactions" value="8"/>
</dbReference>
<dbReference type="STRING" id="9913.ENSBTAP00000068238"/>
<dbReference type="BindingDB" id="P79114"/>
<dbReference type="ChEMBL" id="CHEMBL4295791"/>
<dbReference type="PaxDb" id="9913-ENSBTAP00000026812"/>
<dbReference type="GeneID" id="281935"/>
<dbReference type="KEGG" id="bta:281935"/>
<dbReference type="CTD" id="4651"/>
<dbReference type="eggNOG" id="KOG4229">
    <property type="taxonomic scope" value="Eukaryota"/>
</dbReference>
<dbReference type="InParanoid" id="P79114"/>
<dbReference type="OrthoDB" id="6108017at2759"/>
<dbReference type="Proteomes" id="UP000009136">
    <property type="component" value="Unplaced"/>
</dbReference>
<dbReference type="GO" id="GO:0005938">
    <property type="term" value="C:cell cortex"/>
    <property type="evidence" value="ECO:0007669"/>
    <property type="project" value="UniProtKB-SubCell"/>
</dbReference>
<dbReference type="GO" id="GO:0005829">
    <property type="term" value="C:cytosol"/>
    <property type="evidence" value="ECO:0000304"/>
    <property type="project" value="UniProtKB"/>
</dbReference>
<dbReference type="GO" id="GO:0030175">
    <property type="term" value="C:filopodium"/>
    <property type="evidence" value="ECO:0000318"/>
    <property type="project" value="GO_Central"/>
</dbReference>
<dbReference type="GO" id="GO:0031527">
    <property type="term" value="C:filopodium membrane"/>
    <property type="evidence" value="ECO:0007669"/>
    <property type="project" value="UniProtKB-SubCell"/>
</dbReference>
<dbReference type="GO" id="GO:0032433">
    <property type="term" value="C:filopodium tip"/>
    <property type="evidence" value="ECO:0000314"/>
    <property type="project" value="UniProtKB"/>
</dbReference>
<dbReference type="GO" id="GO:0030027">
    <property type="term" value="C:lamellipodium"/>
    <property type="evidence" value="ECO:0000314"/>
    <property type="project" value="MGI"/>
</dbReference>
<dbReference type="GO" id="GO:0016459">
    <property type="term" value="C:myosin complex"/>
    <property type="evidence" value="ECO:0007669"/>
    <property type="project" value="UniProtKB-KW"/>
</dbReference>
<dbReference type="GO" id="GO:0001726">
    <property type="term" value="C:ruffle"/>
    <property type="evidence" value="ECO:0000314"/>
    <property type="project" value="MGI"/>
</dbReference>
<dbReference type="GO" id="GO:0051015">
    <property type="term" value="F:actin filament binding"/>
    <property type="evidence" value="ECO:0000314"/>
    <property type="project" value="UniProtKB"/>
</dbReference>
<dbReference type="GO" id="GO:0005524">
    <property type="term" value="F:ATP binding"/>
    <property type="evidence" value="ECO:0007669"/>
    <property type="project" value="UniProtKB-KW"/>
</dbReference>
<dbReference type="GO" id="GO:0005516">
    <property type="term" value="F:calmodulin binding"/>
    <property type="evidence" value="ECO:0007669"/>
    <property type="project" value="UniProtKB-KW"/>
</dbReference>
<dbReference type="GO" id="GO:0000146">
    <property type="term" value="F:microfilament motor activity"/>
    <property type="evidence" value="ECO:0000314"/>
    <property type="project" value="UniProtKB"/>
</dbReference>
<dbReference type="GO" id="GO:0005547">
    <property type="term" value="F:phosphatidylinositol-3,4,5-trisphosphate binding"/>
    <property type="evidence" value="ECO:0000314"/>
    <property type="project" value="UniProtKB"/>
</dbReference>
<dbReference type="GO" id="GO:0060002">
    <property type="term" value="F:plus-end directed microfilament motor activity"/>
    <property type="evidence" value="ECO:0000314"/>
    <property type="project" value="UniProtKB"/>
</dbReference>
<dbReference type="GO" id="GO:0030705">
    <property type="term" value="P:cytoskeleton-dependent intracellular transport"/>
    <property type="evidence" value="ECO:0000314"/>
    <property type="project" value="UniProtKB"/>
</dbReference>
<dbReference type="GO" id="GO:0008360">
    <property type="term" value="P:regulation of cell shape"/>
    <property type="evidence" value="ECO:0000315"/>
    <property type="project" value="UniProtKB"/>
</dbReference>
<dbReference type="GO" id="GO:0051489">
    <property type="term" value="P:regulation of filopodium assembly"/>
    <property type="evidence" value="ECO:0000314"/>
    <property type="project" value="UniProtKB"/>
</dbReference>
<dbReference type="GO" id="GO:0007165">
    <property type="term" value="P:signal transduction"/>
    <property type="evidence" value="ECO:0007669"/>
    <property type="project" value="InterPro"/>
</dbReference>
<dbReference type="CDD" id="cd14473">
    <property type="entry name" value="FERM_B-lobe"/>
    <property type="match status" value="1"/>
</dbReference>
<dbReference type="CDD" id="cd13202">
    <property type="entry name" value="FERM_C_MyoX"/>
    <property type="match status" value="1"/>
</dbReference>
<dbReference type="CDD" id="cd17206">
    <property type="entry name" value="FERM_F1_Myosin-X"/>
    <property type="match status" value="1"/>
</dbReference>
<dbReference type="CDD" id="cd14873">
    <property type="entry name" value="MYSc_Myo10"/>
    <property type="match status" value="1"/>
</dbReference>
<dbReference type="CDD" id="cd13296">
    <property type="entry name" value="PH2_MyoX"/>
    <property type="match status" value="1"/>
</dbReference>
<dbReference type="CDD" id="cd13297">
    <property type="entry name" value="PH3_MyoX-like"/>
    <property type="match status" value="1"/>
</dbReference>
<dbReference type="FunFam" id="1.10.10.820:FF:000001">
    <property type="entry name" value="Myosin heavy chain"/>
    <property type="match status" value="1"/>
</dbReference>
<dbReference type="FunFam" id="1.25.40.530:FF:000001">
    <property type="entry name" value="Pleckstrin homology domain-containing family H member 2"/>
    <property type="match status" value="1"/>
</dbReference>
<dbReference type="FunFam" id="3.40.850.10:FF:000008">
    <property type="entry name" value="Putative unconventional myosin-IXa"/>
    <property type="match status" value="1"/>
</dbReference>
<dbReference type="FunFam" id="1.20.80.10:FF:000020">
    <property type="entry name" value="Unconventional myosin-X"/>
    <property type="match status" value="1"/>
</dbReference>
<dbReference type="FunFam" id="2.30.29.30:FF:000195">
    <property type="entry name" value="Unconventional myosin-X"/>
    <property type="match status" value="1"/>
</dbReference>
<dbReference type="FunFam" id="2.30.29.30:FF:000236">
    <property type="entry name" value="Unconventional myosin-X"/>
    <property type="match status" value="1"/>
</dbReference>
<dbReference type="FunFam" id="2.30.29.30:FF:000196">
    <property type="entry name" value="unconventional myosin-X"/>
    <property type="match status" value="1"/>
</dbReference>
<dbReference type="FunFam" id="3.10.20.90:FF:000126">
    <property type="entry name" value="unconventional myosin-X"/>
    <property type="match status" value="1"/>
</dbReference>
<dbReference type="Gene3D" id="1.10.10.820">
    <property type="match status" value="1"/>
</dbReference>
<dbReference type="Gene3D" id="1.20.5.170">
    <property type="match status" value="1"/>
</dbReference>
<dbReference type="Gene3D" id="1.20.5.190">
    <property type="match status" value="1"/>
</dbReference>
<dbReference type="Gene3D" id="1.20.58.530">
    <property type="match status" value="1"/>
</dbReference>
<dbReference type="Gene3D" id="1.20.80.10">
    <property type="match status" value="1"/>
</dbReference>
<dbReference type="Gene3D" id="6.20.240.20">
    <property type="match status" value="1"/>
</dbReference>
<dbReference type="Gene3D" id="3.40.850.10">
    <property type="entry name" value="Kinesin motor domain"/>
    <property type="match status" value="1"/>
</dbReference>
<dbReference type="Gene3D" id="1.20.120.720">
    <property type="entry name" value="Myosin VI head, motor domain, U50 subdomain"/>
    <property type="match status" value="1"/>
</dbReference>
<dbReference type="Gene3D" id="1.25.40.530">
    <property type="entry name" value="MyTH4 domain"/>
    <property type="match status" value="1"/>
</dbReference>
<dbReference type="Gene3D" id="3.10.20.90">
    <property type="entry name" value="Phosphatidylinositol 3-kinase Catalytic Subunit, Chain A, domain 1"/>
    <property type="match status" value="1"/>
</dbReference>
<dbReference type="Gene3D" id="2.30.29.30">
    <property type="entry name" value="Pleckstrin-homology domain (PH domain)/Phosphotyrosine-binding domain (PTB)"/>
    <property type="match status" value="4"/>
</dbReference>
<dbReference type="InterPro" id="IPR051724">
    <property type="entry name" value="Actin_motor_Myosin"/>
</dbReference>
<dbReference type="InterPro" id="IPR019749">
    <property type="entry name" value="Band_41_domain"/>
</dbReference>
<dbReference type="InterPro" id="IPR014352">
    <property type="entry name" value="FERM/acyl-CoA-bd_prot_sf"/>
</dbReference>
<dbReference type="InterPro" id="IPR035963">
    <property type="entry name" value="FERM_2"/>
</dbReference>
<dbReference type="InterPro" id="IPR019748">
    <property type="entry name" value="FERM_central"/>
</dbReference>
<dbReference type="InterPro" id="IPR000299">
    <property type="entry name" value="FERM_domain"/>
</dbReference>
<dbReference type="InterPro" id="IPR000048">
    <property type="entry name" value="IQ_motif_EF-hand-BS"/>
</dbReference>
<dbReference type="InterPro" id="IPR036961">
    <property type="entry name" value="Kinesin_motor_dom_sf"/>
</dbReference>
<dbReference type="InterPro" id="IPR031971">
    <property type="entry name" value="MYO10_CC"/>
</dbReference>
<dbReference type="InterPro" id="IPR001609">
    <property type="entry name" value="Myosin_head_motor_dom-like"/>
</dbReference>
<dbReference type="InterPro" id="IPR041797">
    <property type="entry name" value="MyoX_FERM_C"/>
</dbReference>
<dbReference type="InterPro" id="IPR040640">
    <property type="entry name" value="MyoX_N_SH3"/>
</dbReference>
<dbReference type="InterPro" id="IPR036124">
    <property type="entry name" value="MYSc_Myo10"/>
</dbReference>
<dbReference type="InterPro" id="IPR000857">
    <property type="entry name" value="MyTH4_dom"/>
</dbReference>
<dbReference type="InterPro" id="IPR038185">
    <property type="entry name" value="MyTH4_dom_sf"/>
</dbReference>
<dbReference type="InterPro" id="IPR027417">
    <property type="entry name" value="P-loop_NTPase"/>
</dbReference>
<dbReference type="InterPro" id="IPR011993">
    <property type="entry name" value="PH-like_dom_sf"/>
</dbReference>
<dbReference type="InterPro" id="IPR001849">
    <property type="entry name" value="PH_domain"/>
</dbReference>
<dbReference type="InterPro" id="IPR000159">
    <property type="entry name" value="RA_dom"/>
</dbReference>
<dbReference type="PANTHER" id="PTHR46049">
    <property type="entry name" value="AGAP003327-PA"/>
    <property type="match status" value="1"/>
</dbReference>
<dbReference type="PANTHER" id="PTHR46049:SF2">
    <property type="entry name" value="UNCONVENTIONAL MYOSIN-X"/>
    <property type="match status" value="1"/>
</dbReference>
<dbReference type="Pfam" id="PF00373">
    <property type="entry name" value="FERM_M"/>
    <property type="match status" value="1"/>
</dbReference>
<dbReference type="Pfam" id="PF00612">
    <property type="entry name" value="IQ"/>
    <property type="match status" value="3"/>
</dbReference>
<dbReference type="Pfam" id="PF16735">
    <property type="entry name" value="MYO10_CC"/>
    <property type="match status" value="1"/>
</dbReference>
<dbReference type="Pfam" id="PF00063">
    <property type="entry name" value="Myosin_head"/>
    <property type="match status" value="1"/>
</dbReference>
<dbReference type="Pfam" id="PF00784">
    <property type="entry name" value="MyTH4"/>
    <property type="match status" value="1"/>
</dbReference>
<dbReference type="Pfam" id="PF00169">
    <property type="entry name" value="PH"/>
    <property type="match status" value="2"/>
</dbReference>
<dbReference type="Pfam" id="PF21989">
    <property type="entry name" value="RA_2"/>
    <property type="match status" value="1"/>
</dbReference>
<dbReference type="Pfam" id="PF18597">
    <property type="entry name" value="SH3_19"/>
    <property type="match status" value="1"/>
</dbReference>
<dbReference type="PRINTS" id="PR00193">
    <property type="entry name" value="MYOSINHEAVY"/>
</dbReference>
<dbReference type="SMART" id="SM00295">
    <property type="entry name" value="B41"/>
    <property type="match status" value="1"/>
</dbReference>
<dbReference type="SMART" id="SM00015">
    <property type="entry name" value="IQ"/>
    <property type="match status" value="3"/>
</dbReference>
<dbReference type="SMART" id="SM00242">
    <property type="entry name" value="MYSc"/>
    <property type="match status" value="1"/>
</dbReference>
<dbReference type="SMART" id="SM00139">
    <property type="entry name" value="MyTH4"/>
    <property type="match status" value="1"/>
</dbReference>
<dbReference type="SMART" id="SM00233">
    <property type="entry name" value="PH"/>
    <property type="match status" value="2"/>
</dbReference>
<dbReference type="SUPFAM" id="SSF52540">
    <property type="entry name" value="P-loop containing nucleoside triphosphate hydrolases"/>
    <property type="match status" value="1"/>
</dbReference>
<dbReference type="SUPFAM" id="SSF50729">
    <property type="entry name" value="PH domain-like"/>
    <property type="match status" value="4"/>
</dbReference>
<dbReference type="SUPFAM" id="SSF47031">
    <property type="entry name" value="Second domain of FERM"/>
    <property type="match status" value="1"/>
</dbReference>
<dbReference type="PROSITE" id="PS50057">
    <property type="entry name" value="FERM_3"/>
    <property type="match status" value="1"/>
</dbReference>
<dbReference type="PROSITE" id="PS50096">
    <property type="entry name" value="IQ"/>
    <property type="match status" value="2"/>
</dbReference>
<dbReference type="PROSITE" id="PS51456">
    <property type="entry name" value="MYOSIN_MOTOR"/>
    <property type="match status" value="1"/>
</dbReference>
<dbReference type="PROSITE" id="PS51016">
    <property type="entry name" value="MYTH4"/>
    <property type="match status" value="1"/>
</dbReference>
<dbReference type="PROSITE" id="PS50003">
    <property type="entry name" value="PH_DOMAIN"/>
    <property type="match status" value="2"/>
</dbReference>
<feature type="chain" id="PRO_0000123472" description="Unconventional myosin-X">
    <location>
        <begin position="1"/>
        <end position="2052"/>
    </location>
</feature>
<feature type="domain" description="Myosin motor" evidence="8">
    <location>
        <begin position="63"/>
        <end position="739"/>
    </location>
</feature>
<feature type="domain" description="IQ 1" evidence="5">
    <location>
        <begin position="742"/>
        <end position="763"/>
    </location>
</feature>
<feature type="domain" description="IQ 2" evidence="5">
    <location>
        <begin position="764"/>
        <end position="787"/>
    </location>
</feature>
<feature type="domain" description="IQ 3" evidence="5">
    <location>
        <begin position="788"/>
        <end position="817"/>
    </location>
</feature>
<feature type="domain" description="PH 1" evidence="6">
    <location>
        <begin position="1206"/>
        <end position="1304"/>
    </location>
</feature>
<feature type="domain" description="PH 2" evidence="6">
    <location>
        <begin position="1386"/>
        <end position="1491"/>
    </location>
</feature>
<feature type="domain" description="MyTH4" evidence="7">
    <location>
        <begin position="1541"/>
        <end position="1689"/>
    </location>
</feature>
<feature type="domain" description="FERM" evidence="4">
    <location>
        <begin position="1694"/>
        <end position="2038"/>
    </location>
</feature>
<feature type="region of interest" description="Actin-binding" evidence="8">
    <location>
        <begin position="619"/>
        <end position="641"/>
    </location>
</feature>
<feature type="region of interest" description="SAH" evidence="22">
    <location>
        <begin position="814"/>
        <end position="884"/>
    </location>
</feature>
<feature type="region of interest" description="Disordered" evidence="9">
    <location>
        <begin position="819"/>
        <end position="843"/>
    </location>
</feature>
<feature type="region of interest" description="Disordered" evidence="9">
    <location>
        <begin position="964"/>
        <end position="1093"/>
    </location>
</feature>
<feature type="coiled-coil region" evidence="22">
    <location>
        <begin position="885"/>
        <end position="935"/>
    </location>
</feature>
<feature type="compositionally biased region" description="Acidic residues" evidence="9">
    <location>
        <begin position="988"/>
        <end position="1003"/>
    </location>
</feature>
<feature type="compositionally biased region" description="Polar residues" evidence="9">
    <location>
        <begin position="1040"/>
        <end position="1049"/>
    </location>
</feature>
<feature type="compositionally biased region" description="Acidic residues" evidence="9">
    <location>
        <begin position="1081"/>
        <end position="1092"/>
    </location>
</feature>
<feature type="binding site" evidence="3">
    <location>
        <position position="104"/>
    </location>
    <ligand>
        <name>ATP</name>
        <dbReference type="ChEBI" id="CHEBI:30616"/>
    </ligand>
</feature>
<feature type="binding site" evidence="3">
    <location>
        <position position="113"/>
    </location>
    <ligand>
        <name>ATP</name>
        <dbReference type="ChEBI" id="CHEBI:30616"/>
    </ligand>
</feature>
<feature type="binding site" evidence="3">
    <location>
        <begin position="160"/>
        <end position="165"/>
    </location>
    <ligand>
        <name>ATP</name>
        <dbReference type="ChEBI" id="CHEBI:30616"/>
    </ligand>
</feature>
<feature type="binding site" evidence="3">
    <location>
        <position position="215"/>
    </location>
    <ligand>
        <name>ATP</name>
        <dbReference type="ChEBI" id="CHEBI:30616"/>
    </ligand>
</feature>
<feature type="modified residue" description="N-acetylmethionine" evidence="3">
    <location>
        <position position="1"/>
    </location>
</feature>
<feature type="modified residue" description="Phosphoserine" evidence="2">
    <location>
        <position position="963"/>
    </location>
</feature>
<feature type="modified residue" description="Phosphoserine" evidence="3">
    <location>
        <position position="966"/>
    </location>
</feature>
<feature type="modified residue" description="Phosphothreonine" evidence="2">
    <location>
        <position position="1152"/>
    </location>
</feature>
<feature type="helix" evidence="27">
    <location>
        <begin position="826"/>
        <end position="837"/>
    </location>
</feature>
<feature type="helix" evidence="26">
    <location>
        <begin position="864"/>
        <end position="872"/>
    </location>
</feature>
<feature type="turn" evidence="26">
    <location>
        <begin position="873"/>
        <end position="878"/>
    </location>
</feature>
<feature type="helix" evidence="26">
    <location>
        <begin position="879"/>
        <end position="910"/>
    </location>
</feature>
<feature type="helix" evidence="26">
    <location>
        <begin position="914"/>
        <end position="925"/>
    </location>
</feature>
<keyword id="KW-0002">3D-structure</keyword>
<keyword id="KW-0007">Acetylation</keyword>
<keyword id="KW-0009">Actin-binding</keyword>
<keyword id="KW-0067">ATP-binding</keyword>
<keyword id="KW-0112">Calmodulin-binding</keyword>
<keyword id="KW-1003">Cell membrane</keyword>
<keyword id="KW-0966">Cell projection</keyword>
<keyword id="KW-0175">Coiled coil</keyword>
<keyword id="KW-0963">Cytoplasm</keyword>
<keyword id="KW-0206">Cytoskeleton</keyword>
<keyword id="KW-0472">Membrane</keyword>
<keyword id="KW-0505">Motor protein</keyword>
<keyword id="KW-0518">Myosin</keyword>
<keyword id="KW-0547">Nucleotide-binding</keyword>
<keyword id="KW-0597">Phosphoprotein</keyword>
<keyword id="KW-1185">Reference proteome</keyword>
<keyword id="KW-0677">Repeat</keyword>
<keyword id="KW-0813">Transport</keyword>
<protein>
    <recommendedName>
        <fullName>Unconventional myosin-X</fullName>
    </recommendedName>
    <alternativeName>
        <fullName>Unconventional myosin-10</fullName>
    </alternativeName>
</protein>
<reference key="1">
    <citation type="journal article" date="2000" name="J. Cell Sci.">
        <title>Myosin-X, a novel myosin with pleckstrin homology domains, associates with regions of dynamic actin.</title>
        <authorList>
            <person name="Berg J.S."/>
            <person name="Derfler B.H."/>
            <person name="Pennisi C.M."/>
            <person name="Corey D.P."/>
            <person name="Cheney R.E."/>
        </authorList>
    </citation>
    <scope>NUCLEOTIDE SEQUENCE [MRNA]</scope>
    <scope>SUBCELLULAR LOCATION</scope>
    <scope>TISSUE SPECIFICITY</scope>
    <source>
        <tissue>Aorta</tissue>
    </source>
</reference>
<reference key="2">
    <citation type="journal article" date="2001" name="J. Biol. Chem.">
        <title>Motor function and regulation of myosin X.</title>
        <authorList>
            <person name="Homma K."/>
            <person name="Saito J."/>
            <person name="Ikebe R."/>
            <person name="Ikebe M."/>
        </authorList>
    </citation>
    <scope>FUNCTION</scope>
    <scope>INTERACTION WITH CALM</scope>
</reference>
<reference key="3">
    <citation type="journal article" date="2002" name="Nat. Cell Biol.">
        <title>Myosin-X is an unconventional myosin that undergoes intrafilopodial motility.</title>
        <authorList>
            <person name="Berg J.S."/>
            <person name="Cheney R.E."/>
        </authorList>
    </citation>
    <scope>SUBCELLULAR LOCATION</scope>
</reference>
<reference key="4">
    <citation type="journal article" date="2004" name="Nat. Cell Biol.">
        <title>Myosin-X provides a motor-based link between integrins and the cytoskeleton.</title>
        <authorList>
            <person name="Zhang H."/>
            <person name="Berg J.S."/>
            <person name="Li Z."/>
            <person name="Wang Y."/>
            <person name="Lang P."/>
            <person name="Sousa A.D."/>
            <person name="Bhaskar A."/>
            <person name="Cheney R.E."/>
            <person name="Stromblad S."/>
        </authorList>
    </citation>
    <scope>FUNCTION</scope>
    <scope>SUBCELLULAR LOCATION</scope>
    <scope>INTERACTION WITH ITGB1; ITGB3 AND ITGB5</scope>
</reference>
<reference key="5">
    <citation type="journal article" date="2005" name="J. Biol. Chem.">
        <title>Mechanism of action of myosin X, a membrane-associated molecular motor.</title>
        <authorList>
            <person name="Kovacs M."/>
            <person name="Wang F."/>
            <person name="Sellers J.R."/>
        </authorList>
    </citation>
    <scope>FUNCTION IN ACTIN BINDING AND ATP HYDROLYSIS</scope>
</reference>
<reference key="6">
    <citation type="journal article" date="2006" name="Proc. Natl. Acad. Sci. U.S.A.">
        <title>Myosin-X is a molecular motor that functions in filopodia formation.</title>
        <authorList>
            <person name="Bohil A.B."/>
            <person name="Robertson B.W."/>
            <person name="Cheney R.E."/>
        </authorList>
    </citation>
    <scope>FUNCTION IN REGULATION OF FILOPODIA ASSEMBLY AND REGULATION OF CELL SHAPE</scope>
</reference>
<reference key="7">
    <citation type="journal article" date="2010" name="J. Biol. Chem.">
        <title>Myosin X regulates sealing zone patterning in osteoclasts through linkage of podosomes and microtubules.</title>
        <authorList>
            <person name="McMichael B.K."/>
            <person name="Cheney R.E."/>
            <person name="Lee B.S."/>
        </authorList>
    </citation>
    <scope>FUNCTION</scope>
</reference>
<reference key="8">
    <citation type="journal article" date="2010" name="J. Biol. Chem.">
        <title>Myosin-X induces filopodia by multiple elongation mechanism.</title>
        <authorList>
            <person name="Watanabe T.M."/>
            <person name="Tokuo H."/>
            <person name="Gonda K."/>
            <person name="Higuchi H."/>
            <person name="Ikebe M."/>
        </authorList>
    </citation>
    <scope>FUNCTION</scope>
</reference>
<reference key="9">
    <citation type="journal article" date="2010" name="J. Cell Sci.">
        <title>PtdIns(3,4,5)P is a regulator of myosin-X localization and filopodia formation.</title>
        <authorList>
            <person name="Plantard L."/>
            <person name="Arjonen A."/>
            <person name="Lock J.G."/>
            <person name="Nurani G."/>
            <person name="Ivaska J."/>
            <person name="Stromblad S."/>
        </authorList>
    </citation>
    <scope>FUNCTION</scope>
    <scope>SUBCELLULAR LOCATION</scope>
    <scope>DOMAIN</scope>
    <scope>PHOSPHATIDYLINOSITOL-3,4,5-TRISPHOSPHATE BINDING</scope>
</reference>
<reference key="10">
    <citation type="journal article" date="2010" name="Nat. Struct. Mol. Biol.">
        <title>Single-molecule stepping and structural dynamics of myosin X.</title>
        <authorList>
            <person name="Sun Y."/>
            <person name="Sato O."/>
            <person name="Ruhnow F."/>
            <person name="Arsenault M.E."/>
            <person name="Ikebe M."/>
            <person name="Goldman Y.E."/>
        </authorList>
    </citation>
    <scope>FUNCTION</scope>
    <scope>INTERACTION WITH CALM</scope>
</reference>
<reference key="11">
    <citation type="journal article" date="2011" name="Nat. Struct. Mol. Biol.">
        <title>Phospholipid-dependent regulation of the motor activity of myosin X.</title>
        <authorList>
            <person name="Umeki N."/>
            <person name="Jung H.S."/>
            <person name="Sakai T."/>
            <person name="Sato O."/>
            <person name="Ikebe R."/>
            <person name="Ikebe M."/>
        </authorList>
    </citation>
    <scope>FUNCTION</scope>
    <scope>DOMAIN</scope>
    <scope>INTERACTION WITH CALM</scope>
    <scope>SUBUNIT</scope>
</reference>
<reference key="12">
    <citation type="journal article" date="2014" name="J. Biol. Chem.">
        <title>Stable single alpha-helices are constant force springs in proteins.</title>
        <authorList>
            <person name="Wolny M."/>
            <person name="Batchelor M."/>
            <person name="Knight P.J."/>
            <person name="Paci E."/>
            <person name="Dougan L."/>
            <person name="Peckham M."/>
        </authorList>
    </citation>
    <scope>SAH DOMAIN</scope>
</reference>
<reference evidence="24" key="13">
    <citation type="journal article" date="2016" name="Biophys. J.">
        <title>Competition between Coiled-Coil Structures and the Impact on Myosin-10 Bundle Selection.</title>
        <authorList>
            <person name="Vavra K.C."/>
            <person name="Xia Y."/>
            <person name="Rock R.S."/>
        </authorList>
    </citation>
    <scope>STRUCTURE BY NMR OF 884-923</scope>
    <scope>COILED COIL</scope>
</reference>
<reference evidence="25" key="14">
    <citation type="journal article" date="2016" name="Nat. Commun.">
        <title>The myosin X motor is optimized for movement on actin bundles.</title>
        <authorList>
            <person name="Ropars V."/>
            <person name="Yang Z."/>
            <person name="Isabet T."/>
            <person name="Blanc F."/>
            <person name="Zhou K."/>
            <person name="Lin T."/>
            <person name="Liu X."/>
            <person name="Hissier P."/>
            <person name="Samazan F."/>
            <person name="Amigues B."/>
            <person name="Yang E.D."/>
            <person name="Park H."/>
            <person name="Pylypenko O."/>
            <person name="Cecchini M."/>
            <person name="Sindelar C.V."/>
            <person name="Sweeney H.L."/>
            <person name="Houdusse A."/>
        </authorList>
    </citation>
    <scope>X-RAY CRYSTALLOGRAPHY (3.49 ANGSTROMS) OF 796-929</scope>
    <scope>SAH DOMAIN</scope>
    <scope>COILED COIL</scope>
</reference>
<organism>
    <name type="scientific">Bos taurus</name>
    <name type="common">Bovine</name>
    <dbReference type="NCBI Taxonomy" id="9913"/>
    <lineage>
        <taxon>Eukaryota</taxon>
        <taxon>Metazoa</taxon>
        <taxon>Chordata</taxon>
        <taxon>Craniata</taxon>
        <taxon>Vertebrata</taxon>
        <taxon>Euteleostomi</taxon>
        <taxon>Mammalia</taxon>
        <taxon>Eutheria</taxon>
        <taxon>Laurasiatheria</taxon>
        <taxon>Artiodactyla</taxon>
        <taxon>Ruminantia</taxon>
        <taxon>Pecora</taxon>
        <taxon>Bovidae</taxon>
        <taxon>Bovinae</taxon>
        <taxon>Bos</taxon>
    </lineage>
</organism>
<comment type="function">
    <text evidence="3 11 12 13 14 15 16 17 18 19">Myosins are actin-based motor molecules with ATPase activity. Unconventional myosins serve in intracellular movements. MYO10 binds to actin filaments and actin bundles and functions as a plus end-directed motor. Moves with higher velocity and takes larger steps on actin bundles than on single actin filaments (By similarity). The tail domain binds to membranous compartments containing phosphatidylinositol 3,4,5-trisphosphate, which are then moved relative to actin filaments. Regulates cell shape, cell spreading and cell adhesion. Stimulates the formation and elongation of filopodia. In hippocampal neurons it induces the formation of dendritic filopodia by trafficking the actin-remodeling protein VASP to the tips of filopodia, where it promotes actin elongation (By similarity). Plays a role in formation of the podosome belt in osteoclasts.</text>
</comment>
<comment type="subunit">
    <text evidence="1 11 12 16 19">Monomer, when in an inactive conformation in the cytosol. Homodimer in its active, membrane-bound conformation; antiparallel coiled coil-mediated dimer formation. Interacts with ECPAS. Interacts with NEO 1. Interacts with VASP. Interacts with DCC and ITGB5; the presence of DCC inhibits ITGB5 binding. Interacts with tubulin; ITGB5 or DCC binding inhibits tubulin binding. Interacts strongly with CALM3 and weakly with CALM, the CALM3 interaction is essential for function in filopodial extension and motility (By similarity). Interacts with ITGB1, ITGB3 and ITGB5.</text>
</comment>
<comment type="subcellular location">
    <subcellularLocation>
        <location>Cytoplasm</location>
        <location>Cytosol</location>
    </subcellularLocation>
    <subcellularLocation>
        <location>Cell projection</location>
        <location>Lamellipodium</location>
    </subcellularLocation>
    <subcellularLocation>
        <location>Cell projection</location>
        <location>Ruffle</location>
    </subcellularLocation>
    <subcellularLocation>
        <location>Cytoplasm</location>
        <location>Cytoskeleton</location>
    </subcellularLocation>
    <subcellularLocation>
        <location>Cell projection</location>
        <location>Filopodium tip</location>
    </subcellularLocation>
    <subcellularLocation>
        <location>Cytoplasm</location>
        <location>Cell cortex</location>
    </subcellularLocation>
    <subcellularLocation>
        <location>Cell projection</location>
        <location>Filopodium membrane</location>
        <topology>Peripheral membrane protein</topology>
    </subcellularLocation>
    <text>May be in an inactive, monomeric conformation in the cytosol. Detected in cytoplasmic punctae and in cell projections. Colocalizes with actin fibers. Interacts with microtubules. Undergoes forward and rearward movements within filopodia. Interaction with membranes containing phosphatidylinositol 3,4,5-trisphosphate mediates localization at filopodium membranes.</text>
</comment>
<comment type="tissue specificity">
    <text evidence="10">Detected in kidney, testis, liver, kidney, cerebellum and brain cortex (at protein level).</text>
</comment>
<comment type="domain">
    <text>Interaction between the motor domain and the tail leads to an inactive, monomeric conformation. Phospholipid binding via the PH domains leads to the formation of the active, dimeric form of the protein and strongly increases actin-dependent ATPase activity and motor activity.</text>
</comment>
<comment type="domain">
    <text>Interacts with membranes containing phosphatidylinositol-3,4,5-trisphosphate via the PH domains.</text>
</comment>
<comment type="domain">
    <text evidence="1">IQ 3 domain mediates high-affinity calcium-dependent binding to CALM3/CLP.</text>
</comment>
<comment type="domain">
    <text evidence="20 21 22">The SAH (single alpha-helix) region is characterized by a high content of charged residues which are predicted to stabilize the alpha-helical structure by ionic bonds (PubMed:25122759). It can refold after extension suggesting an in vivo force-dependent function (PubMed:25122759). An anti-parallel coiled coil is located C-terminal to the SAH domain and mediates dimerization (PubMed:27276269, PubMed:27580874).</text>
</comment>
<comment type="similarity">
    <text evidence="23">Belongs to the TRAFAC class myosin-kinesin ATPase superfamily. Myosin family.</text>
</comment>
<comment type="caution">
    <text evidence="23">Represents an unconventional myosin. This protein should not be confused with the conventional myosin-10 (MYH10).</text>
</comment>
<proteinExistence type="evidence at protein level"/>
<sequence length="2052" mass="235839">MDNFFPEGTRVWLRENGQHFPSTVNSCAEGVVVFQTDYGQVFTYKQSTITHQKVMPMQPTDEEGVDDMATLTELHGGAIMHNLYQRYKRNQIYTYIGSIIASVNPYKTITGLYSRDAVDRYSRCHLGELPPHVFAIANECYRCLWKRHDNQCVLISGESGAGKTESTKLILKFLSAISQQSVDLSSKEKTSSVEQAILESSPIMEAFGNAKTVYNNNSSRFGKFVQLNIGQKGNIQGGRIVDYLLEKNRVVRQNPGERNYHIFYALLAGLGHEEREEFYLSVPENYHYLNQSGCVTDRTISDQESFREVIMAMEVMQFSKEEVREVLRLLAGILHLGNIEFITAGGAQVSFKTALGRSAELLGLDPAQLTDALTQRSMFLRGEEILTPLNVQQAADSRDSLAMALYARCFEWVIKKINSRIKGKDDFKSIGILDIFGFENFEVNHFEQFNINYANEKLQEYFNKHIFSLEQLEYSREGLVWEDIDWIDNGECLDLIEKKLGLLALINEESHFPQATDSTLLEKLHNQHANNHFYVKPRVAVNNFGVKHYAGEVQYDVRGILEKNRDTFRDDLLNLLRESRFDFIYDLFEHVSSRNNQDTLKCGSKHRRPTVSSQFKDSLHSLMATLSASNPFFVRCIKPNMQKMPDQFDQAVVVNQLRYSGMLETVRIRKAGYAVRRPFQDFYKRYKVLMRNVALPEDIRGKCTALLQLYDASNSEWQLGKTKVFLRESLEQKLEKRQEEEVTRAAMVIRAHVLGYLARKQYKKVLDCVVIIQKNYRAFLLRRRFLHLKKAAVVFQKQLRGQIARRVYRQLLAEKRAEEEKRKREEEEKRKREEEERERERERREAELRAQQEEAARKQRELEALQQESQRAAELSRELEKQKENKQVEEILRLEKEIEDLQRMKERQELSLTEASLQKLQQLRDEELRRLEDEACRAAQEFLESLNFDEIDECVRNIERSLSVGSGCTGEQGAGAEKPSFNFSQPYPEEEEVDEGFEADDDAFKDSPNPSEHGHSDQRTSGIRTSDESSEEDPYMNDTVVPTSPSADSTVLLAPSEHDSSAGEPTYCLPQTPGALPAPEGDYDYDQDDYEDGAITSGSSVTFSNSCSSQWSPDYRCSVGTYNSSGAYRFSSEGAQSSFEDSEEDFDSRFDTDDELSYRRDSVYSCVTLPYFHSFLYMKGGLMNSWKRRWCVLKDETFLWFRSKQEALKQGWLHKKGGGSSTLSRRNWKKRWFVLRQAKLMYFENDSEEKLKGTVEVRAAKEIIDNTSKENGIDIIMADRTFHLIAESPEDASQWFSVLSQVHASTDQEIREMHDEQANPQNAVGTLDVGLIDSVCASDSPDRPNSFVIITANRVLHCNADTPEEMHHWITLLQRSKGDTRVEGQEFIVRGWLHKEVKNSPKMSSLKLKKRWFVLTHNSLDYYKSSEKNALKLGTLVLNSLCSVVPPDEKIFKETGYWNVTVYGRKHCYRLYTKLLNEATRWSSAIQNVTDTKAPIDTPTQQLIQDIKENCLNSDVVEQIYKRNPILRHTHHPLHSPLLPLPYGDINLNLLKDKGYTTLQDEAIKIFNSLQQLESMSDPIPIIQGILQTGHDLRPLRDELYCQLIKQTNKVPHPGSVGNLCSWQILTCLSCTFLPSRGILKYLKFHLRRIREQFPGTEMEKYALFIYESLKKTKCREFVPSRDEIEALIHRQEMTSTVHCHGGGSCKITVNSHTTAGEVVEKLIRGLAMEDSRNMFALFEYNGHVDKAIESRTIVADVLAKFEKLAATSEVGEQPWKFYFKLYCFLDTDNVPKDSVEFAFMFEQAHEAVIHGHYPAPEENLQVLAALRLQYLQGDYAPHAPVPPLEEVYSLQRLKARISQSTKSFTPGERLEKRRTSFLEGTLRRSFRTGSAIRQKAEEEQMVDMWVKEEVCSARASILDKWKKFQGMSQEQAMAKYMALIKEWPGYGSTLFDVECKEGGFPQDLWLGVSADAVSVYKRGEGRPLEVFQYEHILSFGAPLANTYKIVVDERELLFETSEVVDVAKLMKAYISMIVKKRYSTSRSVSSQGSSR</sequence>
<accession>P79114</accession>
<evidence type="ECO:0000250" key="1"/>
<evidence type="ECO:0000250" key="2">
    <source>
        <dbReference type="UniProtKB" id="D3ZJP6"/>
    </source>
</evidence>
<evidence type="ECO:0000250" key="3">
    <source>
        <dbReference type="UniProtKB" id="Q9HD67"/>
    </source>
</evidence>
<evidence type="ECO:0000255" key="4">
    <source>
        <dbReference type="PROSITE-ProRule" id="PRU00084"/>
    </source>
</evidence>
<evidence type="ECO:0000255" key="5">
    <source>
        <dbReference type="PROSITE-ProRule" id="PRU00116"/>
    </source>
</evidence>
<evidence type="ECO:0000255" key="6">
    <source>
        <dbReference type="PROSITE-ProRule" id="PRU00145"/>
    </source>
</evidence>
<evidence type="ECO:0000255" key="7">
    <source>
        <dbReference type="PROSITE-ProRule" id="PRU00359"/>
    </source>
</evidence>
<evidence type="ECO:0000255" key="8">
    <source>
        <dbReference type="PROSITE-ProRule" id="PRU00782"/>
    </source>
</evidence>
<evidence type="ECO:0000256" key="9">
    <source>
        <dbReference type="SAM" id="MobiDB-lite"/>
    </source>
</evidence>
<evidence type="ECO:0000269" key="10">
    <source>
    </source>
</evidence>
<evidence type="ECO:0000269" key="11">
    <source>
    </source>
</evidence>
<evidence type="ECO:0000269" key="12">
    <source>
    </source>
</evidence>
<evidence type="ECO:0000269" key="13">
    <source>
    </source>
</evidence>
<evidence type="ECO:0000269" key="14">
    <source>
    </source>
</evidence>
<evidence type="ECO:0000269" key="15">
    <source>
    </source>
</evidence>
<evidence type="ECO:0000269" key="16">
    <source>
    </source>
</evidence>
<evidence type="ECO:0000269" key="17">
    <source>
    </source>
</evidence>
<evidence type="ECO:0000269" key="18">
    <source>
    </source>
</evidence>
<evidence type="ECO:0000269" key="19">
    <source>
    </source>
</evidence>
<evidence type="ECO:0000269" key="20">
    <source>
    </source>
</evidence>
<evidence type="ECO:0000269" key="21">
    <source>
    </source>
</evidence>
<evidence type="ECO:0000269" key="22">
    <source>
    </source>
</evidence>
<evidence type="ECO:0000305" key="23"/>
<evidence type="ECO:0007744" key="24">
    <source>
        <dbReference type="PDB" id="2N9B"/>
    </source>
</evidence>
<evidence type="ECO:0007744" key="25">
    <source>
        <dbReference type="PDB" id="5HMO"/>
    </source>
</evidence>
<evidence type="ECO:0007829" key="26">
    <source>
        <dbReference type="PDB" id="5HMO"/>
    </source>
</evidence>
<evidence type="ECO:0007829" key="27">
    <source>
        <dbReference type="PDB" id="6HR1"/>
    </source>
</evidence>